<sequence>DLQNVNITLRILFRPVASQLPRIYTSIGEDYDERFDAGELITQRQVSDDLTEREFTEAVEAKQVAQQEAERARKLEAAEDIAYQLSR</sequence>
<protein>
    <recommendedName>
        <fullName>Prohibitin 1</fullName>
    </recommendedName>
</protein>
<evidence type="ECO:0000250" key="1">
    <source>
        <dbReference type="UniProtKB" id="P35232"/>
    </source>
</evidence>
<evidence type="ECO:0000250" key="2">
    <source>
        <dbReference type="UniProtKB" id="P67778"/>
    </source>
</evidence>
<evidence type="ECO:0000250" key="3">
    <source>
        <dbReference type="UniProtKB" id="P67779"/>
    </source>
</evidence>
<evidence type="ECO:0000255" key="4"/>
<evidence type="ECO:0000305" key="5"/>
<accession>P86220</accession>
<reference key="1">
    <citation type="journal article" date="2010" name="Asian J. Androl.">
        <title>Glucose-regulated protein precursor (GRP78) and tumor rejection antigen (GP96) are unique to hamster caput epididymal spermatozoa.</title>
        <authorList>
            <person name="Kameshwari D.B."/>
            <person name="Bhande S."/>
            <person name="Sundaram C.S."/>
            <person name="Kota V."/>
            <person name="Siva A.B."/>
            <person name="Shivaji S."/>
        </authorList>
    </citation>
    <scope>IDENTIFICATION BY MASS SPECTROMETRY</scope>
</reference>
<proteinExistence type="evidence at protein level"/>
<feature type="chain" id="PRO_0000394751" description="Prohibitin 1">
    <location>
        <begin position="1" status="less than"/>
        <end position="87" status="greater than"/>
    </location>
</feature>
<feature type="modified residue" description="Phosphothreonine" evidence="1">
    <location>
        <position position="8"/>
    </location>
</feature>
<feature type="modified residue" description="N6-acetyllysine" evidence="2">
    <location>
        <position position="62"/>
    </location>
</feature>
<feature type="modified residue" description="Phosphotyrosine" evidence="1">
    <location>
        <position position="83"/>
    </location>
</feature>
<feature type="non-consecutive residues" evidence="5">
    <location>
        <begin position="34"/>
        <end position="35"/>
    </location>
</feature>
<feature type="non-consecutive residues" evidence="5">
    <location>
        <begin position="44"/>
        <end position="45"/>
    </location>
</feature>
<feature type="non-consecutive residues" evidence="5">
    <location>
        <begin position="53"/>
        <end position="54"/>
    </location>
</feature>
<feature type="non-consecutive residues" evidence="5">
    <location>
        <begin position="73"/>
        <end position="74"/>
    </location>
</feature>
<feature type="non-terminal residue">
    <location>
        <position position="1"/>
    </location>
</feature>
<feature type="non-terminal residue">
    <location>
        <position position="87"/>
    </location>
</feature>
<organism>
    <name type="scientific">Mesocricetus auratus</name>
    <name type="common">Golden hamster</name>
    <dbReference type="NCBI Taxonomy" id="10036"/>
    <lineage>
        <taxon>Eukaryota</taxon>
        <taxon>Metazoa</taxon>
        <taxon>Chordata</taxon>
        <taxon>Craniata</taxon>
        <taxon>Vertebrata</taxon>
        <taxon>Euteleostomi</taxon>
        <taxon>Mammalia</taxon>
        <taxon>Eutheria</taxon>
        <taxon>Euarchontoglires</taxon>
        <taxon>Glires</taxon>
        <taxon>Rodentia</taxon>
        <taxon>Myomorpha</taxon>
        <taxon>Muroidea</taxon>
        <taxon>Cricetidae</taxon>
        <taxon>Cricetinae</taxon>
        <taxon>Mesocricetus</taxon>
    </lineage>
</organism>
<name>PHB1_MESAU</name>
<dbReference type="SMR" id="P86220"/>
<dbReference type="Proteomes" id="UP000189706">
    <property type="component" value="Unplaced"/>
</dbReference>
<dbReference type="GO" id="GO:0009986">
    <property type="term" value="C:cell surface"/>
    <property type="evidence" value="ECO:0000250"/>
    <property type="project" value="UniProtKB"/>
</dbReference>
<dbReference type="GO" id="GO:0005737">
    <property type="term" value="C:cytoplasm"/>
    <property type="evidence" value="ECO:0000250"/>
    <property type="project" value="UniProtKB"/>
</dbReference>
<dbReference type="GO" id="GO:0005743">
    <property type="term" value="C:mitochondrial inner membrane"/>
    <property type="evidence" value="ECO:0000250"/>
    <property type="project" value="UniProtKB"/>
</dbReference>
<dbReference type="GO" id="GO:0035632">
    <property type="term" value="C:mitochondrial prohibitin complex"/>
    <property type="evidence" value="ECO:0000250"/>
    <property type="project" value="UniProtKB"/>
</dbReference>
<dbReference type="GO" id="GO:0005739">
    <property type="term" value="C:mitochondrion"/>
    <property type="evidence" value="ECO:0000250"/>
    <property type="project" value="UniProtKB"/>
</dbReference>
<dbReference type="GO" id="GO:0005634">
    <property type="term" value="C:nucleus"/>
    <property type="evidence" value="ECO:0000250"/>
    <property type="project" value="UniProtKB"/>
</dbReference>
<dbReference type="GO" id="GO:0005886">
    <property type="term" value="C:plasma membrane"/>
    <property type="evidence" value="ECO:0000250"/>
    <property type="project" value="UniProtKB"/>
</dbReference>
<dbReference type="GO" id="GO:0042113">
    <property type="term" value="P:B cell activation"/>
    <property type="evidence" value="ECO:0000250"/>
    <property type="project" value="UniProtKB"/>
</dbReference>
<dbReference type="GO" id="GO:0071897">
    <property type="term" value="P:DNA biosynthetic process"/>
    <property type="evidence" value="ECO:0007669"/>
    <property type="project" value="UniProtKB-KW"/>
</dbReference>
<dbReference type="GO" id="GO:0007005">
    <property type="term" value="P:mitochondrion organization"/>
    <property type="evidence" value="ECO:0007669"/>
    <property type="project" value="TreeGrafter"/>
</dbReference>
<dbReference type="GO" id="GO:0002639">
    <property type="term" value="P:positive regulation of immunoglobulin production"/>
    <property type="evidence" value="ECO:0000250"/>
    <property type="project" value="UniProtKB"/>
</dbReference>
<dbReference type="GO" id="GO:0032740">
    <property type="term" value="P:positive regulation of interleukin-17 production"/>
    <property type="evidence" value="ECO:0000250"/>
    <property type="project" value="UniProtKB"/>
</dbReference>
<dbReference type="GO" id="GO:1901224">
    <property type="term" value="P:positive regulation of non-canonical NF-kappaB signal transduction"/>
    <property type="evidence" value="ECO:0000250"/>
    <property type="project" value="UniProtKB"/>
</dbReference>
<dbReference type="GO" id="GO:0051897">
    <property type="term" value="P:positive regulation of phosphatidylinositol 3-kinase/protein kinase B signal transduction"/>
    <property type="evidence" value="ECO:0000250"/>
    <property type="project" value="UniProtKB"/>
</dbReference>
<dbReference type="GO" id="GO:0048661">
    <property type="term" value="P:positive regulation of smooth muscle cell proliferation"/>
    <property type="evidence" value="ECO:0000250"/>
    <property type="project" value="UniProtKB"/>
</dbReference>
<dbReference type="GO" id="GO:0072538">
    <property type="term" value="P:T-helper 17 type immune response"/>
    <property type="evidence" value="ECO:0000250"/>
    <property type="project" value="UniProtKB"/>
</dbReference>
<dbReference type="InterPro" id="IPR000163">
    <property type="entry name" value="Prohibitin"/>
</dbReference>
<dbReference type="PANTHER" id="PTHR23222">
    <property type="entry name" value="PROHIBITIN"/>
    <property type="match status" value="1"/>
</dbReference>
<dbReference type="PANTHER" id="PTHR23222:SF0">
    <property type="entry name" value="PROHIBITIN 1"/>
    <property type="match status" value="1"/>
</dbReference>
<keyword id="KW-0007">Acetylation</keyword>
<keyword id="KW-1003">Cell membrane</keyword>
<keyword id="KW-0963">Cytoplasm</keyword>
<keyword id="KW-0237">DNA synthesis</keyword>
<keyword id="KW-0472">Membrane</keyword>
<keyword id="KW-0496">Mitochondrion</keyword>
<keyword id="KW-0999">Mitochondrion inner membrane</keyword>
<keyword id="KW-0539">Nucleus</keyword>
<keyword id="KW-0597">Phosphoprotein</keyword>
<keyword id="KW-1185">Reference proteome</keyword>
<comment type="function">
    <text evidence="1 2 3">Protein with pleiotropic attributes mediated in a cell-compartment- and tissue-specific manner, which include the plasma membrane-associated cell signaling functions, mitochondrial chaperone, and transcriptional co-regulator of transcription factors in the nucleus (By similarity). Plays a role in adipose tissue and glucose homeostasis in a sex-specific manner (By similarity). Contributes to pulmonary vascular remodeling by accelerating proliferation of pulmonary arterial smooth muscle cells (By similarity).</text>
</comment>
<comment type="function">
    <text evidence="1 2">In the mitochondria, together with PHB2, forms large ring complexes (prohibitin complexes) in the inner mitochondrial membrane (IMM) and functions as a chaperone protein that stabilizes mitochondrial respiratory enzymes and maintains mitochondrial integrity in the IMM, which is required for mitochondrial morphogenesis, neuronal survival, and normal lifespan (By similarity). The prohibitin complex, with DNAJC19, regulates cardiolipin remodeling and the protein turnover of OMA1 in a cardiolipin-binding manner (By similarity). Regulates mitochondrial respiration activity playing a role in cellular aging. The prohibitin complex plays a role of mitophagy receptor involved in targeting mitochondria for autophagic degradation. Involved in mitochondrial-mediated antiviral innate immunity, activates RIG-I-mediated signal transduction and production of IFNB1 and proinflammatory cytokine IL6 (By similarity).</text>
</comment>
<comment type="function">
    <text evidence="1">In the nucleus, acts as a transcription coregulator, enhances promoter binding by TP53, a transcription factor it activates, but reduces the promoter binding by E2F1, a transcription factor it represses. Interacts with STAT3 to affect IL17 secretion in T-helper Th17 cells.</text>
</comment>
<comment type="function">
    <text evidence="2">In the plasma membrane, cooperates with CD86 to mediate CD86-signaling in B lymphocytes that regulates the level of IgG1 produced through the activation of distal signaling intermediates. Upon CD40 engagement, required to activate NF-kappa-B signaling pathway via phospholipase C and protein kinase C activation.</text>
</comment>
<comment type="subunit">
    <text evidence="1 2">The mitochondrial prohibitin complex consists of two subunits (PHB1 and PHB2), assembled into a membrane-associated ring-shaped supercomplex of approximately 1 mDa. Interacts with STOML2. Interacts with MAP1LC3B (membrane-bound form LC3-II); the interaction requires PHB2 and takes place upon Parkin-mediated mitochondrial damage. Interacts with STAT3 (unphosphorylated or phosphorylated at 'Ser-727'). Interacts with CLPB (By similarity). Interacts with CD86 (via cytoplasmic domain); the interactions increases after priming with CD40 (By similarity).</text>
</comment>
<comment type="subcellular location">
    <subcellularLocation>
        <location evidence="1">Mitochondrion inner membrane</location>
    </subcellularLocation>
    <subcellularLocation>
        <location evidence="1">Nucleus</location>
    </subcellularLocation>
    <subcellularLocation>
        <location evidence="1">Cytoplasm</location>
    </subcellularLocation>
    <subcellularLocation>
        <location evidence="1">Cell membrane</location>
    </subcellularLocation>
</comment>
<comment type="similarity">
    <text evidence="4">Belongs to the prohibitin family.</text>
</comment>
<gene>
    <name type="primary">PHB1</name>
    <name evidence="1" type="synonym">PHB</name>
</gene>